<name>RSGA_SALSV</name>
<accession>B4TSE3</accession>
<organism>
    <name type="scientific">Salmonella schwarzengrund (strain CVM19633)</name>
    <dbReference type="NCBI Taxonomy" id="439843"/>
    <lineage>
        <taxon>Bacteria</taxon>
        <taxon>Pseudomonadati</taxon>
        <taxon>Pseudomonadota</taxon>
        <taxon>Gammaproteobacteria</taxon>
        <taxon>Enterobacterales</taxon>
        <taxon>Enterobacteriaceae</taxon>
        <taxon>Salmonella</taxon>
    </lineage>
</organism>
<protein>
    <recommendedName>
        <fullName evidence="1">Small ribosomal subunit biogenesis GTPase RsgA</fullName>
        <ecNumber evidence="1">3.6.1.-</ecNumber>
    </recommendedName>
</protein>
<keyword id="KW-0963">Cytoplasm</keyword>
<keyword id="KW-0342">GTP-binding</keyword>
<keyword id="KW-0378">Hydrolase</keyword>
<keyword id="KW-0479">Metal-binding</keyword>
<keyword id="KW-0547">Nucleotide-binding</keyword>
<keyword id="KW-0690">Ribosome biogenesis</keyword>
<keyword id="KW-0694">RNA-binding</keyword>
<keyword id="KW-0699">rRNA-binding</keyword>
<keyword id="KW-0862">Zinc</keyword>
<dbReference type="EC" id="3.6.1.-" evidence="1"/>
<dbReference type="EMBL" id="CP001127">
    <property type="protein sequence ID" value="ACF90588.1"/>
    <property type="molecule type" value="Genomic_DNA"/>
</dbReference>
<dbReference type="SMR" id="B4TSE3"/>
<dbReference type="KEGG" id="sew:SeSA_A4618"/>
<dbReference type="HOGENOM" id="CLU_033617_2_0_6"/>
<dbReference type="Proteomes" id="UP000001865">
    <property type="component" value="Chromosome"/>
</dbReference>
<dbReference type="GO" id="GO:0005737">
    <property type="term" value="C:cytoplasm"/>
    <property type="evidence" value="ECO:0007669"/>
    <property type="project" value="UniProtKB-SubCell"/>
</dbReference>
<dbReference type="GO" id="GO:0005525">
    <property type="term" value="F:GTP binding"/>
    <property type="evidence" value="ECO:0007669"/>
    <property type="project" value="UniProtKB-UniRule"/>
</dbReference>
<dbReference type="GO" id="GO:0003924">
    <property type="term" value="F:GTPase activity"/>
    <property type="evidence" value="ECO:0007669"/>
    <property type="project" value="UniProtKB-UniRule"/>
</dbReference>
<dbReference type="GO" id="GO:0046872">
    <property type="term" value="F:metal ion binding"/>
    <property type="evidence" value="ECO:0007669"/>
    <property type="project" value="UniProtKB-KW"/>
</dbReference>
<dbReference type="GO" id="GO:0019843">
    <property type="term" value="F:rRNA binding"/>
    <property type="evidence" value="ECO:0007669"/>
    <property type="project" value="UniProtKB-KW"/>
</dbReference>
<dbReference type="GO" id="GO:0042274">
    <property type="term" value="P:ribosomal small subunit biogenesis"/>
    <property type="evidence" value="ECO:0007669"/>
    <property type="project" value="UniProtKB-UniRule"/>
</dbReference>
<dbReference type="CDD" id="cd01854">
    <property type="entry name" value="YjeQ_EngC"/>
    <property type="match status" value="1"/>
</dbReference>
<dbReference type="FunFam" id="1.10.40.50:FF:000001">
    <property type="entry name" value="Small ribosomal subunit biogenesis GTPase RsgA"/>
    <property type="match status" value="1"/>
</dbReference>
<dbReference type="FunFam" id="3.40.50.300:FF:000389">
    <property type="entry name" value="Small ribosomal subunit biogenesis GTPase RsgA"/>
    <property type="match status" value="1"/>
</dbReference>
<dbReference type="Gene3D" id="2.40.50.140">
    <property type="entry name" value="Nucleic acid-binding proteins"/>
    <property type="match status" value="1"/>
</dbReference>
<dbReference type="Gene3D" id="3.40.50.300">
    <property type="entry name" value="P-loop containing nucleotide triphosphate hydrolases"/>
    <property type="match status" value="1"/>
</dbReference>
<dbReference type="Gene3D" id="1.10.40.50">
    <property type="entry name" value="Probable gtpase engc, domain 3"/>
    <property type="match status" value="1"/>
</dbReference>
<dbReference type="HAMAP" id="MF_01820">
    <property type="entry name" value="GTPase_RsgA"/>
    <property type="match status" value="1"/>
</dbReference>
<dbReference type="InterPro" id="IPR030378">
    <property type="entry name" value="G_CP_dom"/>
</dbReference>
<dbReference type="InterPro" id="IPR012340">
    <property type="entry name" value="NA-bd_OB-fold"/>
</dbReference>
<dbReference type="InterPro" id="IPR027417">
    <property type="entry name" value="P-loop_NTPase"/>
</dbReference>
<dbReference type="InterPro" id="IPR004881">
    <property type="entry name" value="Ribosome_biogen_GTPase_RsgA"/>
</dbReference>
<dbReference type="InterPro" id="IPR010914">
    <property type="entry name" value="RsgA_GTPase_dom"/>
</dbReference>
<dbReference type="NCBIfam" id="NF008931">
    <property type="entry name" value="PRK12288.1"/>
    <property type="match status" value="1"/>
</dbReference>
<dbReference type="NCBIfam" id="TIGR00157">
    <property type="entry name" value="ribosome small subunit-dependent GTPase A"/>
    <property type="match status" value="1"/>
</dbReference>
<dbReference type="PANTHER" id="PTHR32120">
    <property type="entry name" value="SMALL RIBOSOMAL SUBUNIT BIOGENESIS GTPASE RSGA"/>
    <property type="match status" value="1"/>
</dbReference>
<dbReference type="PANTHER" id="PTHR32120:SF11">
    <property type="entry name" value="SMALL RIBOSOMAL SUBUNIT BIOGENESIS GTPASE RSGA 1, MITOCHONDRIAL-RELATED"/>
    <property type="match status" value="1"/>
</dbReference>
<dbReference type="Pfam" id="PF03193">
    <property type="entry name" value="RsgA_GTPase"/>
    <property type="match status" value="1"/>
</dbReference>
<dbReference type="SUPFAM" id="SSF52540">
    <property type="entry name" value="P-loop containing nucleoside triphosphate hydrolases"/>
    <property type="match status" value="1"/>
</dbReference>
<dbReference type="PROSITE" id="PS50936">
    <property type="entry name" value="ENGC_GTPASE"/>
    <property type="match status" value="1"/>
</dbReference>
<dbReference type="PROSITE" id="PS51721">
    <property type="entry name" value="G_CP"/>
    <property type="match status" value="1"/>
</dbReference>
<reference key="1">
    <citation type="journal article" date="2011" name="J. Bacteriol.">
        <title>Comparative genomics of 28 Salmonella enterica isolates: evidence for CRISPR-mediated adaptive sublineage evolution.</title>
        <authorList>
            <person name="Fricke W.F."/>
            <person name="Mammel M.K."/>
            <person name="McDermott P.F."/>
            <person name="Tartera C."/>
            <person name="White D.G."/>
            <person name="Leclerc J.E."/>
            <person name="Ravel J."/>
            <person name="Cebula T.A."/>
        </authorList>
    </citation>
    <scope>NUCLEOTIDE SEQUENCE [LARGE SCALE GENOMIC DNA]</scope>
    <source>
        <strain>CVM19633</strain>
    </source>
</reference>
<sequence>MSKNKLSKGQQRRVNANHQRRLKTSVEKADYDDNLFGEPAEGIVISRFGMHADVESADGEVHRCNIRRTIRSLVTGDRVVWRPGKAAAEGVNVKGIVEAVHERTSVLTRPDFYDGVKPIAANIDQIVIVSAILPELSLNIIDRYLVGCETLQVEPLIVLNKIDLLDDEGMDFVNEQMDIYRNIGYRVLMVSSHTQDGLKPLEEALTGRISIFAGQSGVGKSSLLNALLGLQNEILTNDVSNVSGLGQHTTTAARLYHFPHGGDVIDSPGVREFGLWHLEPEQITRGFVEFHDYLGHCKYRDCKHDADPGCAIREAVENGAIAETRFENYHRILESMAQVKTRKNFSDTDD</sequence>
<comment type="function">
    <text evidence="1">One of several proteins that assist in the late maturation steps of the functional core of the 30S ribosomal subunit. Helps release RbfA from mature subunits. May play a role in the assembly of ribosomal proteins into the subunit. Circularly permuted GTPase that catalyzes slow GTP hydrolysis, GTPase activity is stimulated by the 30S ribosomal subunit.</text>
</comment>
<comment type="cofactor">
    <cofactor evidence="1">
        <name>Zn(2+)</name>
        <dbReference type="ChEBI" id="CHEBI:29105"/>
    </cofactor>
    <text evidence="1">Binds 1 zinc ion per subunit.</text>
</comment>
<comment type="subunit">
    <text evidence="1">Monomer. Associates with 30S ribosomal subunit, binds 16S rRNA.</text>
</comment>
<comment type="subcellular location">
    <subcellularLocation>
        <location evidence="1">Cytoplasm</location>
    </subcellularLocation>
</comment>
<comment type="similarity">
    <text evidence="1">Belongs to the TRAFAC class YlqF/YawG GTPase family. RsgA subfamily.</text>
</comment>
<gene>
    <name evidence="1" type="primary">rsgA</name>
    <name type="ordered locus">SeSA_A4618</name>
</gene>
<proteinExistence type="inferred from homology"/>
<evidence type="ECO:0000255" key="1">
    <source>
        <dbReference type="HAMAP-Rule" id="MF_01820"/>
    </source>
</evidence>
<evidence type="ECO:0000255" key="2">
    <source>
        <dbReference type="PROSITE-ProRule" id="PRU01058"/>
    </source>
</evidence>
<evidence type="ECO:0000256" key="3">
    <source>
        <dbReference type="SAM" id="MobiDB-lite"/>
    </source>
</evidence>
<feature type="chain" id="PRO_1000188138" description="Small ribosomal subunit biogenesis GTPase RsgA">
    <location>
        <begin position="1"/>
        <end position="350"/>
    </location>
</feature>
<feature type="domain" description="CP-type G" evidence="2">
    <location>
        <begin position="104"/>
        <end position="273"/>
    </location>
</feature>
<feature type="region of interest" description="Disordered" evidence="3">
    <location>
        <begin position="1"/>
        <end position="24"/>
    </location>
</feature>
<feature type="compositionally biased region" description="Polar residues" evidence="3">
    <location>
        <begin position="1"/>
        <end position="17"/>
    </location>
</feature>
<feature type="binding site" evidence="1">
    <location>
        <begin position="160"/>
        <end position="163"/>
    </location>
    <ligand>
        <name>GTP</name>
        <dbReference type="ChEBI" id="CHEBI:37565"/>
    </ligand>
</feature>
<feature type="binding site" evidence="1">
    <location>
        <begin position="214"/>
        <end position="222"/>
    </location>
    <ligand>
        <name>GTP</name>
        <dbReference type="ChEBI" id="CHEBI:37565"/>
    </ligand>
</feature>
<feature type="binding site" evidence="1">
    <location>
        <position position="297"/>
    </location>
    <ligand>
        <name>Zn(2+)</name>
        <dbReference type="ChEBI" id="CHEBI:29105"/>
    </ligand>
</feature>
<feature type="binding site" evidence="1">
    <location>
        <position position="302"/>
    </location>
    <ligand>
        <name>Zn(2+)</name>
        <dbReference type="ChEBI" id="CHEBI:29105"/>
    </ligand>
</feature>
<feature type="binding site" evidence="1">
    <location>
        <position position="304"/>
    </location>
    <ligand>
        <name>Zn(2+)</name>
        <dbReference type="ChEBI" id="CHEBI:29105"/>
    </ligand>
</feature>
<feature type="binding site" evidence="1">
    <location>
        <position position="310"/>
    </location>
    <ligand>
        <name>Zn(2+)</name>
        <dbReference type="ChEBI" id="CHEBI:29105"/>
    </ligand>
</feature>